<gene>
    <name type="primary">bp26</name>
    <name type="ordered locus">BAbS19_I13950</name>
</gene>
<accession>Q44642</accession>
<accession>B2S6U1</accession>
<name>BP26_BRUA1</name>
<reference key="1">
    <citation type="journal article" date="1996" name="J. Clin. Microbiol.">
        <title>Cloning of Brucella abortus gene and characterization of expressed 26-kilodalton periplasmic protein: potential use for diagnosis.</title>
        <authorList>
            <person name="Rossetti O.L."/>
            <person name="Arese A.I."/>
            <person name="Boschiroli M.L."/>
            <person name="Cravero S.L."/>
        </authorList>
    </citation>
    <scope>NUCLEOTIDE SEQUENCE [GENOMIC DNA]</scope>
    <scope>PROTEIN SEQUENCE OF 29-39</scope>
    <scope>SUBCELLULAR LOCATION</scope>
</reference>
<reference key="2">
    <citation type="journal article" date="2008" name="PLoS ONE">
        <title>Genome sequence of Brucella abortus vaccine strain S19 compared to virulent strains yields candidate virulence genes.</title>
        <authorList>
            <person name="Crasta O.R."/>
            <person name="Folkerts O."/>
            <person name="Fei Z."/>
            <person name="Mane S.P."/>
            <person name="Evans C."/>
            <person name="Martino-Catt S."/>
            <person name="Bricker B."/>
            <person name="Yu G."/>
            <person name="Du L."/>
            <person name="Sobral B.W."/>
        </authorList>
    </citation>
    <scope>NUCLEOTIDE SEQUENCE [LARGE SCALE GENOMIC DNA]</scope>
    <source>
        <strain>S19</strain>
    </source>
</reference>
<comment type="subcellular location">
    <subcellularLocation>
        <location evidence="1">Periplasm</location>
    </subcellularLocation>
</comment>
<protein>
    <recommendedName>
        <fullName>26 kDa periplasmic immunogenic protein</fullName>
    </recommendedName>
</protein>
<keyword id="KW-0002">3D-structure</keyword>
<keyword id="KW-0903">Direct protein sequencing</keyword>
<keyword id="KW-0574">Periplasm</keyword>
<keyword id="KW-0732">Signal</keyword>
<dbReference type="EMBL" id="Z54148">
    <property type="protein sequence ID" value="CAA90862.1"/>
    <property type="molecule type" value="Genomic_DNA"/>
</dbReference>
<dbReference type="EMBL" id="CP000887">
    <property type="protein sequence ID" value="ACD72888.1"/>
    <property type="molecule type" value="Genomic_DNA"/>
</dbReference>
<dbReference type="RefSeq" id="WP_002969580.1">
    <property type="nucleotide sequence ID" value="NC_010742.1"/>
</dbReference>
<dbReference type="PDB" id="4HVZ">
    <property type="method" value="X-ray"/>
    <property type="resolution" value="3.50 A"/>
    <property type="chains" value="A/B/C/D=29-250"/>
</dbReference>
<dbReference type="PDBsum" id="4HVZ"/>
<dbReference type="SMR" id="Q44642"/>
<dbReference type="KEGG" id="bmc:BAbS19_I13950"/>
<dbReference type="HOGENOM" id="CLU_080344_4_0_5"/>
<dbReference type="EvolutionaryTrace" id="Q44642"/>
<dbReference type="Proteomes" id="UP000002565">
    <property type="component" value="Chromosome 1"/>
</dbReference>
<dbReference type="GO" id="GO:0042597">
    <property type="term" value="C:periplasmic space"/>
    <property type="evidence" value="ECO:0007669"/>
    <property type="project" value="UniProtKB-SubCell"/>
</dbReference>
<dbReference type="GO" id="GO:0006974">
    <property type="term" value="P:DNA damage response"/>
    <property type="evidence" value="ECO:0007669"/>
    <property type="project" value="TreeGrafter"/>
</dbReference>
<dbReference type="Gene3D" id="3.30.110.170">
    <property type="entry name" value="Protein of unknown function (DUF541), domain 1"/>
    <property type="match status" value="1"/>
</dbReference>
<dbReference type="Gene3D" id="3.30.70.2970">
    <property type="entry name" value="Protein of unknown function (DUF541), domain 2"/>
    <property type="match status" value="1"/>
</dbReference>
<dbReference type="InterPro" id="IPR052022">
    <property type="entry name" value="26kDa_periplasmic_antigen"/>
</dbReference>
<dbReference type="InterPro" id="IPR007497">
    <property type="entry name" value="SIMPL/DUF541"/>
</dbReference>
<dbReference type="PANTHER" id="PTHR34387:SF1">
    <property type="entry name" value="PERIPLASMIC IMMUNOGENIC PROTEIN"/>
    <property type="match status" value="1"/>
</dbReference>
<dbReference type="PANTHER" id="PTHR34387">
    <property type="entry name" value="SLR1258 PROTEIN"/>
    <property type="match status" value="1"/>
</dbReference>
<dbReference type="Pfam" id="PF04402">
    <property type="entry name" value="SIMPL"/>
    <property type="match status" value="1"/>
</dbReference>
<feature type="signal peptide" evidence="1">
    <location>
        <begin position="1"/>
        <end position="28"/>
    </location>
</feature>
<feature type="chain" id="PRO_0000020825" description="26 kDa periplasmic immunogenic protein">
    <location>
        <begin position="29"/>
        <end position="250"/>
    </location>
</feature>
<feature type="sequence conflict" description="In Ref. 1; CAA90862." evidence="2" ref="1">
    <original>A</original>
    <variation>P</variation>
    <location>
        <position position="50"/>
    </location>
</feature>
<feature type="sequence conflict" description="In Ref. 1; CAA90862." evidence="2" ref="1">
    <original>N</original>
    <variation>NNEAMTANN</variation>
    <location>
        <position position="76"/>
    </location>
</feature>
<feature type="sequence conflict" description="In Ref. 1; CAA90862." evidence="2" ref="1">
    <original>T</original>
    <variation>R</variation>
    <location>
        <position position="80"/>
    </location>
</feature>
<feature type="sequence conflict" description="In Ref. 1; CAA90862." evidence="2" ref="1">
    <original>D</original>
    <variation>H</variation>
    <location>
        <position position="145"/>
    </location>
</feature>
<feature type="sequence conflict" description="In Ref. 1; CAA90862." evidence="2" ref="1">
    <original>L</original>
    <variation>F</variation>
    <location>
        <position position="158"/>
    </location>
</feature>
<feature type="sequence conflict" description="In Ref. 1; CAA90862." evidence="2" ref="1">
    <original>NEAR</original>
    <variation>TRG</variation>
    <location>
        <begin position="170"/>
        <end position="173"/>
    </location>
</feature>
<feature type="sequence conflict" description="In Ref. 1; CAA90862." evidence="2" ref="1">
    <original>A</original>
    <variation>P</variation>
    <location>
        <position position="184"/>
    </location>
</feature>
<feature type="sequence conflict" description="In Ref. 1; CAA90862." evidence="2" ref="1">
    <original>P</original>
    <variation>PPM</variation>
    <location>
        <position position="207"/>
    </location>
</feature>
<feature type="strand" evidence="3">
    <location>
        <begin position="39"/>
        <end position="50"/>
    </location>
</feature>
<feature type="strand" evidence="3">
    <location>
        <begin position="54"/>
        <end position="67"/>
    </location>
</feature>
<feature type="helix" evidence="3">
    <location>
        <begin position="68"/>
        <end position="89"/>
    </location>
</feature>
<feature type="strand" evidence="3">
    <location>
        <begin position="95"/>
        <end position="97"/>
    </location>
</feature>
<feature type="strand" evidence="3">
    <location>
        <begin position="102"/>
        <end position="108"/>
    </location>
</feature>
<feature type="strand" evidence="3">
    <location>
        <begin position="120"/>
        <end position="134"/>
    </location>
</feature>
<feature type="helix" evidence="3">
    <location>
        <begin position="137"/>
        <end position="139"/>
    </location>
</feature>
<feature type="helix" evidence="3">
    <location>
        <begin position="140"/>
        <end position="149"/>
    </location>
</feature>
<feature type="helix" evidence="3">
    <location>
        <begin position="166"/>
        <end position="190"/>
    </location>
</feature>
<feature type="strand" evidence="3">
    <location>
        <begin position="194"/>
        <end position="203"/>
    </location>
</feature>
<feature type="helix" evidence="3">
    <location>
        <begin position="215"/>
        <end position="217"/>
    </location>
</feature>
<feature type="helix" evidence="3">
    <location>
        <begin position="218"/>
        <end position="222"/>
    </location>
</feature>
<feature type="strand" evidence="3">
    <location>
        <begin position="237"/>
        <end position="250"/>
    </location>
</feature>
<proteinExistence type="evidence at protein level"/>
<evidence type="ECO:0000269" key="1">
    <source>
    </source>
</evidence>
<evidence type="ECO:0000305" key="2"/>
<evidence type="ECO:0007829" key="3">
    <source>
        <dbReference type="PDB" id="4HVZ"/>
    </source>
</evidence>
<sequence length="250" mass="26553">MNTRASNFLAASFSTIMLVGAFSLPAFAQENQMTTQPARIAVTGEGMMTASPDMAILNLSVLRQAKTAREAMTANNEAMTKVLDAMKKAGIEDRDLQTGGIDIQPIYVYPDDKNNLKEPTITGYSVSTSLTVRVRELANVGKILDESVTLGVNQGGDLNLVNDNPSAVINEARKRAVANAIAKAKTLADAAGVGLGRVVEISELSRPPMPMPIARGQFRTMLAAAPDNSVPIAAGENSYNVSVNVVFEIK</sequence>
<organism>
    <name type="scientific">Brucella abortus (strain S19)</name>
    <dbReference type="NCBI Taxonomy" id="430066"/>
    <lineage>
        <taxon>Bacteria</taxon>
        <taxon>Pseudomonadati</taxon>
        <taxon>Pseudomonadota</taxon>
        <taxon>Alphaproteobacteria</taxon>
        <taxon>Hyphomicrobiales</taxon>
        <taxon>Brucellaceae</taxon>
        <taxon>Brucella/Ochrobactrum group</taxon>
        <taxon>Brucella</taxon>
    </lineage>
</organism>